<keyword id="KW-0967">Endosome</keyword>
<keyword id="KW-0472">Membrane</keyword>
<keyword id="KW-0653">Protein transport</keyword>
<keyword id="KW-1185">Reference proteome</keyword>
<keyword id="KW-0812">Transmembrane</keyword>
<keyword id="KW-1133">Transmembrane helix</keyword>
<keyword id="KW-0813">Transport</keyword>
<organism>
    <name type="scientific">Dictyostelium discoideum</name>
    <name type="common">Social amoeba</name>
    <dbReference type="NCBI Taxonomy" id="44689"/>
    <lineage>
        <taxon>Eukaryota</taxon>
        <taxon>Amoebozoa</taxon>
        <taxon>Evosea</taxon>
        <taxon>Eumycetozoa</taxon>
        <taxon>Dictyostelia</taxon>
        <taxon>Dictyosteliales</taxon>
        <taxon>Dictyosteliaceae</taxon>
        <taxon>Dictyostelium</taxon>
    </lineage>
</organism>
<evidence type="ECO:0000250" key="1"/>
<evidence type="ECO:0000255" key="2"/>
<evidence type="ECO:0000305" key="3"/>
<dbReference type="EMBL" id="AAFI02000035">
    <property type="protein sequence ID" value="EAL67336.1"/>
    <property type="molecule type" value="Genomic_DNA"/>
</dbReference>
<dbReference type="RefSeq" id="XP_641314.1">
    <property type="nucleotide sequence ID" value="XM_636222.1"/>
</dbReference>
<dbReference type="FunCoup" id="Q54VP1">
    <property type="interactions" value="610"/>
</dbReference>
<dbReference type="STRING" id="44689.Q54VP1"/>
<dbReference type="PaxDb" id="44689-DDB0233395"/>
<dbReference type="EnsemblProtists" id="EAL67336">
    <property type="protein sequence ID" value="EAL67336"/>
    <property type="gene ID" value="DDB_G0280219"/>
</dbReference>
<dbReference type="GeneID" id="8622446"/>
<dbReference type="KEGG" id="ddi:DDB_G0280219"/>
<dbReference type="dictyBase" id="DDB_G0280219">
    <property type="gene designation" value="vps55"/>
</dbReference>
<dbReference type="VEuPathDB" id="AmoebaDB:DDB_G0280219"/>
<dbReference type="eggNOG" id="KOG2174">
    <property type="taxonomic scope" value="Eukaryota"/>
</dbReference>
<dbReference type="HOGENOM" id="CLU_134810_0_0_1"/>
<dbReference type="InParanoid" id="Q54VP1"/>
<dbReference type="OMA" id="ICARCAN"/>
<dbReference type="PhylomeDB" id="Q54VP1"/>
<dbReference type="PRO" id="PR:Q54VP1"/>
<dbReference type="Proteomes" id="UP000002195">
    <property type="component" value="Chromosome 3"/>
</dbReference>
<dbReference type="GO" id="GO:0005768">
    <property type="term" value="C:endosome"/>
    <property type="evidence" value="ECO:0000318"/>
    <property type="project" value="GO_Central"/>
</dbReference>
<dbReference type="GO" id="GO:0010008">
    <property type="term" value="C:endosome membrane"/>
    <property type="evidence" value="ECO:0007669"/>
    <property type="project" value="UniProtKB-SubCell"/>
</dbReference>
<dbReference type="GO" id="GO:0005770">
    <property type="term" value="C:late endosome"/>
    <property type="evidence" value="ECO:0000250"/>
    <property type="project" value="dictyBase"/>
</dbReference>
<dbReference type="GO" id="GO:0045324">
    <property type="term" value="P:late endosome to vacuole transport"/>
    <property type="evidence" value="ECO:0000250"/>
    <property type="project" value="dictyBase"/>
</dbReference>
<dbReference type="GO" id="GO:0032511">
    <property type="term" value="P:late endosome to vacuole transport via multivesicular body sorting pathway"/>
    <property type="evidence" value="ECO:0000318"/>
    <property type="project" value="GO_Central"/>
</dbReference>
<dbReference type="GO" id="GO:0015031">
    <property type="term" value="P:protein transport"/>
    <property type="evidence" value="ECO:0007669"/>
    <property type="project" value="UniProtKB-KW"/>
</dbReference>
<dbReference type="InterPro" id="IPR007262">
    <property type="entry name" value="Vps55/LEPROT"/>
</dbReference>
<dbReference type="PANTHER" id="PTHR12050">
    <property type="entry name" value="LEPTIN RECEPTOR-RELATED"/>
    <property type="match status" value="1"/>
</dbReference>
<dbReference type="PANTHER" id="PTHR12050:SF0">
    <property type="entry name" value="RH04491P"/>
    <property type="match status" value="1"/>
</dbReference>
<dbReference type="Pfam" id="PF04133">
    <property type="entry name" value="Vps55"/>
    <property type="match status" value="1"/>
</dbReference>
<sequence>MGHDIKGFSCAFAVGLLFNILACIVSHSGYPIIVVASYFLAPFPNILCRNRDSFSSEKGTFEDIGLFLTGLFITSGFAIPMILAHSDIISGKALAFSMAGGVTVYATIITFLWFFNRHNDEDNNW</sequence>
<gene>
    <name type="primary">vps55</name>
    <name type="ORF">DDB_G0280219</name>
</gene>
<proteinExistence type="inferred from homology"/>
<feature type="chain" id="PRO_0000327390" description="Vacuolar protein sorting-associated protein 55 homolog">
    <location>
        <begin position="1"/>
        <end position="125"/>
    </location>
</feature>
<feature type="topological domain" description="Cytoplasmic" evidence="1">
    <location>
        <begin position="1"/>
        <end position="4"/>
    </location>
</feature>
<feature type="transmembrane region" description="Helical" evidence="2">
    <location>
        <begin position="5"/>
        <end position="25"/>
    </location>
</feature>
<feature type="topological domain" description="Lumenal" evidence="1">
    <location>
        <begin position="26"/>
        <end position="27"/>
    </location>
</feature>
<feature type="transmembrane region" description="Helical" evidence="2">
    <location>
        <begin position="28"/>
        <end position="48"/>
    </location>
</feature>
<feature type="topological domain" description="Cytoplasmic" evidence="1">
    <location>
        <begin position="49"/>
        <end position="63"/>
    </location>
</feature>
<feature type="transmembrane region" description="Helical" evidence="2">
    <location>
        <begin position="64"/>
        <end position="84"/>
    </location>
</feature>
<feature type="topological domain" description="Lumenal" evidence="1">
    <location>
        <begin position="85"/>
        <end position="94"/>
    </location>
</feature>
<feature type="transmembrane region" description="Helical" evidence="2">
    <location>
        <begin position="95"/>
        <end position="115"/>
    </location>
</feature>
<feature type="topological domain" description="Cytoplasmic" evidence="1">
    <location>
        <begin position="116"/>
        <end position="125"/>
    </location>
</feature>
<comment type="function">
    <text evidence="1">Involved in endosomal protein transport.</text>
</comment>
<comment type="subcellular location">
    <subcellularLocation>
        <location evidence="1">Endosome membrane</location>
        <topology evidence="1">Multi-pass membrane protein</topology>
    </subcellularLocation>
</comment>
<comment type="similarity">
    <text evidence="3">Belongs to the OB-RGRP/VPS55 family.</text>
</comment>
<accession>Q54VP1</accession>
<reference key="1">
    <citation type="journal article" date="2005" name="Nature">
        <title>The genome of the social amoeba Dictyostelium discoideum.</title>
        <authorList>
            <person name="Eichinger L."/>
            <person name="Pachebat J.A."/>
            <person name="Gloeckner G."/>
            <person name="Rajandream M.A."/>
            <person name="Sucgang R."/>
            <person name="Berriman M."/>
            <person name="Song J."/>
            <person name="Olsen R."/>
            <person name="Szafranski K."/>
            <person name="Xu Q."/>
            <person name="Tunggal B."/>
            <person name="Kummerfeld S."/>
            <person name="Madera M."/>
            <person name="Konfortov B.A."/>
            <person name="Rivero F."/>
            <person name="Bankier A.T."/>
            <person name="Lehmann R."/>
            <person name="Hamlin N."/>
            <person name="Davies R."/>
            <person name="Gaudet P."/>
            <person name="Fey P."/>
            <person name="Pilcher K."/>
            <person name="Chen G."/>
            <person name="Saunders D."/>
            <person name="Sodergren E.J."/>
            <person name="Davis P."/>
            <person name="Kerhornou A."/>
            <person name="Nie X."/>
            <person name="Hall N."/>
            <person name="Anjard C."/>
            <person name="Hemphill L."/>
            <person name="Bason N."/>
            <person name="Farbrother P."/>
            <person name="Desany B."/>
            <person name="Just E."/>
            <person name="Morio T."/>
            <person name="Rost R."/>
            <person name="Churcher C.M."/>
            <person name="Cooper J."/>
            <person name="Haydock S."/>
            <person name="van Driessche N."/>
            <person name="Cronin A."/>
            <person name="Goodhead I."/>
            <person name="Muzny D.M."/>
            <person name="Mourier T."/>
            <person name="Pain A."/>
            <person name="Lu M."/>
            <person name="Harper D."/>
            <person name="Lindsay R."/>
            <person name="Hauser H."/>
            <person name="James K.D."/>
            <person name="Quiles M."/>
            <person name="Madan Babu M."/>
            <person name="Saito T."/>
            <person name="Buchrieser C."/>
            <person name="Wardroper A."/>
            <person name="Felder M."/>
            <person name="Thangavelu M."/>
            <person name="Johnson D."/>
            <person name="Knights A."/>
            <person name="Loulseged H."/>
            <person name="Mungall K.L."/>
            <person name="Oliver K."/>
            <person name="Price C."/>
            <person name="Quail M.A."/>
            <person name="Urushihara H."/>
            <person name="Hernandez J."/>
            <person name="Rabbinowitsch E."/>
            <person name="Steffen D."/>
            <person name="Sanders M."/>
            <person name="Ma J."/>
            <person name="Kohara Y."/>
            <person name="Sharp S."/>
            <person name="Simmonds M.N."/>
            <person name="Spiegler S."/>
            <person name="Tivey A."/>
            <person name="Sugano S."/>
            <person name="White B."/>
            <person name="Walker D."/>
            <person name="Woodward J.R."/>
            <person name="Winckler T."/>
            <person name="Tanaka Y."/>
            <person name="Shaulsky G."/>
            <person name="Schleicher M."/>
            <person name="Weinstock G.M."/>
            <person name="Rosenthal A."/>
            <person name="Cox E.C."/>
            <person name="Chisholm R.L."/>
            <person name="Gibbs R.A."/>
            <person name="Loomis W.F."/>
            <person name="Platzer M."/>
            <person name="Kay R.R."/>
            <person name="Williams J.G."/>
            <person name="Dear P.H."/>
            <person name="Noegel A.A."/>
            <person name="Barrell B.G."/>
            <person name="Kuspa A."/>
        </authorList>
    </citation>
    <scope>NUCLEOTIDE SEQUENCE [LARGE SCALE GENOMIC DNA]</scope>
    <source>
        <strain>AX4</strain>
    </source>
</reference>
<protein>
    <recommendedName>
        <fullName>Vacuolar protein sorting-associated protein 55 homolog</fullName>
    </recommendedName>
</protein>
<name>VPS55_DICDI</name>